<sequence length="341" mass="37783">MATIKDVAKRAGVSTTTVSHVINKTRFVAEETKAAVGAAIKELHYSPSAVARSLKVNHTKSIGLLATSSEAPYFAEVIEAVENSCYSKGYTLILCNSHNNLDKQRAYLAMLAQKRVDGLLVMCSEYPDQLLGMLEDYRNIPMVVMDWGAARGDFTDSIIDNAFAGGYLAGRYLIERGHRDIGAIPGQLSRNTGGGRHQGFLKAMEEANIEVRDEWIVQGDFEPESGYKAMHQILSQKHRPTAVFCGGDIMAMGAICAADELGLRVPQDISVIGYDNVRNARYFTPALTTIHQPKERLGEMAFTMLLDRIISKREESQVIEVHPKLIERRSVADGPFIDYRR</sequence>
<organism>
    <name type="scientific">Serratia proteamaculans (strain 568)</name>
    <dbReference type="NCBI Taxonomy" id="399741"/>
    <lineage>
        <taxon>Bacteria</taxon>
        <taxon>Pseudomonadati</taxon>
        <taxon>Pseudomonadota</taxon>
        <taxon>Gammaproteobacteria</taxon>
        <taxon>Enterobacterales</taxon>
        <taxon>Yersiniaceae</taxon>
        <taxon>Serratia</taxon>
    </lineage>
</organism>
<protein>
    <recommendedName>
        <fullName evidence="1">HTH-type transcriptional repressor PurR</fullName>
    </recommendedName>
    <alternativeName>
        <fullName evidence="1">Pur regulon repressor</fullName>
    </alternativeName>
    <alternativeName>
        <fullName evidence="1">Purine nucleotide synthesis repressor</fullName>
    </alternativeName>
</protein>
<keyword id="KW-0238">DNA-binding</keyword>
<keyword id="KW-0658">Purine biosynthesis</keyword>
<keyword id="KW-0678">Repressor</keyword>
<keyword id="KW-0804">Transcription</keyword>
<keyword id="KW-0805">Transcription regulation</keyword>
<proteinExistence type="inferred from homology"/>
<feature type="chain" id="PRO_1000085877" description="HTH-type transcriptional repressor PurR">
    <location>
        <begin position="1"/>
        <end position="341"/>
    </location>
</feature>
<feature type="domain" description="HTH lacI-type" evidence="1">
    <location>
        <begin position="2"/>
        <end position="56"/>
    </location>
</feature>
<feature type="DNA-binding region" description="H-T-H motif" evidence="1">
    <location>
        <begin position="4"/>
        <end position="23"/>
    </location>
</feature>
<feature type="DNA-binding region" evidence="1">
    <location>
        <begin position="48"/>
        <end position="56"/>
    </location>
</feature>
<feature type="binding site" evidence="1">
    <location>
        <position position="73"/>
    </location>
    <ligand>
        <name>hypoxanthine</name>
        <dbReference type="ChEBI" id="CHEBI:17368"/>
    </ligand>
</feature>
<feature type="binding site" evidence="1">
    <location>
        <position position="190"/>
    </location>
    <ligand>
        <name>hypoxanthine</name>
        <dbReference type="ChEBI" id="CHEBI:17368"/>
    </ligand>
</feature>
<feature type="binding site" evidence="1">
    <location>
        <position position="192"/>
    </location>
    <ligand>
        <name>hypoxanthine</name>
        <dbReference type="ChEBI" id="CHEBI:17368"/>
    </ligand>
</feature>
<feature type="binding site" evidence="1">
    <location>
        <position position="221"/>
    </location>
    <ligand>
        <name>hypoxanthine</name>
        <dbReference type="ChEBI" id="CHEBI:17368"/>
    </ligand>
</feature>
<feature type="binding site" evidence="1">
    <location>
        <position position="275"/>
    </location>
    <ligand>
        <name>hypoxanthine</name>
        <dbReference type="ChEBI" id="CHEBI:17368"/>
    </ligand>
</feature>
<evidence type="ECO:0000255" key="1">
    <source>
        <dbReference type="HAMAP-Rule" id="MF_01277"/>
    </source>
</evidence>
<accession>A8GDV6</accession>
<reference key="1">
    <citation type="submission" date="2007-09" db="EMBL/GenBank/DDBJ databases">
        <title>Complete sequence of chromosome of Serratia proteamaculans 568.</title>
        <authorList>
            <consortium name="US DOE Joint Genome Institute"/>
            <person name="Copeland A."/>
            <person name="Lucas S."/>
            <person name="Lapidus A."/>
            <person name="Barry K."/>
            <person name="Glavina del Rio T."/>
            <person name="Dalin E."/>
            <person name="Tice H."/>
            <person name="Pitluck S."/>
            <person name="Chain P."/>
            <person name="Malfatti S."/>
            <person name="Shin M."/>
            <person name="Vergez L."/>
            <person name="Schmutz J."/>
            <person name="Larimer F."/>
            <person name="Land M."/>
            <person name="Hauser L."/>
            <person name="Kyrpides N."/>
            <person name="Kim E."/>
            <person name="Taghavi S."/>
            <person name="Newman L."/>
            <person name="Vangronsveld J."/>
            <person name="van der Lelie D."/>
            <person name="Richardson P."/>
        </authorList>
    </citation>
    <scope>NUCLEOTIDE SEQUENCE [LARGE SCALE GENOMIC DNA]</scope>
    <source>
        <strain>568</strain>
    </source>
</reference>
<comment type="function">
    <text evidence="1">Is the main repressor of the genes involved in the de novo synthesis of purine nucleotides, regulating purB, purC, purEK, purF, purHD, purL, purMN and guaBA expression. PurR is allosterically activated to bind its cognate DNA by binding the purine corepressors, hypoxanthine or guanine, thereby effecting transcription repression.</text>
</comment>
<comment type="pathway">
    <text>Purine metabolism; purine nucleotide biosynthesis [regulation].</text>
</comment>
<comment type="subunit">
    <text evidence="1">Homodimer.</text>
</comment>
<comment type="domain">
    <text evidence="1">Consists of two structural and functional domains: an N-terminal DNA-binding domain, approximately the first 60 residues, and a larger C-terminal domain, approximately 280 residues, which imparts the function of corepressor binding and oligomerization.</text>
</comment>
<dbReference type="EMBL" id="CP000826">
    <property type="protein sequence ID" value="ABV41296.1"/>
    <property type="molecule type" value="Genomic_DNA"/>
</dbReference>
<dbReference type="SMR" id="A8GDV6"/>
<dbReference type="STRING" id="399741.Spro_2195"/>
<dbReference type="KEGG" id="spe:Spro_2195"/>
<dbReference type="eggNOG" id="COG1609">
    <property type="taxonomic scope" value="Bacteria"/>
</dbReference>
<dbReference type="HOGENOM" id="CLU_037628_6_2_6"/>
<dbReference type="OrthoDB" id="9798934at2"/>
<dbReference type="UniPathway" id="UPA00488"/>
<dbReference type="GO" id="GO:0003700">
    <property type="term" value="F:DNA-binding transcription factor activity"/>
    <property type="evidence" value="ECO:0007669"/>
    <property type="project" value="TreeGrafter"/>
</dbReference>
<dbReference type="GO" id="GO:0000976">
    <property type="term" value="F:transcription cis-regulatory region binding"/>
    <property type="evidence" value="ECO:0007669"/>
    <property type="project" value="TreeGrafter"/>
</dbReference>
<dbReference type="GO" id="GO:0045892">
    <property type="term" value="P:negative regulation of DNA-templated transcription"/>
    <property type="evidence" value="ECO:0007669"/>
    <property type="project" value="UniProtKB-UniRule"/>
</dbReference>
<dbReference type="GO" id="GO:0006164">
    <property type="term" value="P:purine nucleotide biosynthetic process"/>
    <property type="evidence" value="ECO:0007669"/>
    <property type="project" value="UniProtKB-UniPathway"/>
</dbReference>
<dbReference type="CDD" id="cd01392">
    <property type="entry name" value="HTH_LacI"/>
    <property type="match status" value="1"/>
</dbReference>
<dbReference type="CDD" id="cd06275">
    <property type="entry name" value="PBP1_PurR"/>
    <property type="match status" value="1"/>
</dbReference>
<dbReference type="FunFam" id="1.10.260.40:FF:000002">
    <property type="entry name" value="HTH-type transcriptional repressor PurR"/>
    <property type="match status" value="1"/>
</dbReference>
<dbReference type="FunFam" id="3.40.50.2300:FF:000045">
    <property type="entry name" value="HTH-type transcriptional repressor PurR"/>
    <property type="match status" value="1"/>
</dbReference>
<dbReference type="Gene3D" id="3.40.50.2300">
    <property type="match status" value="2"/>
</dbReference>
<dbReference type="Gene3D" id="1.10.260.40">
    <property type="entry name" value="lambda repressor-like DNA-binding domains"/>
    <property type="match status" value="1"/>
</dbReference>
<dbReference type="HAMAP" id="MF_01277">
    <property type="entry name" value="HTH_type_PurR"/>
    <property type="match status" value="1"/>
</dbReference>
<dbReference type="InterPro" id="IPR000843">
    <property type="entry name" value="HTH_LacI"/>
</dbReference>
<dbReference type="InterPro" id="IPR046335">
    <property type="entry name" value="LacI/GalR-like_sensor"/>
</dbReference>
<dbReference type="InterPro" id="IPR010982">
    <property type="entry name" value="Lambda_DNA-bd_dom_sf"/>
</dbReference>
<dbReference type="InterPro" id="IPR028082">
    <property type="entry name" value="Peripla_BP_I"/>
</dbReference>
<dbReference type="InterPro" id="IPR023588">
    <property type="entry name" value="Tscrpt_reg_HTH_PurR"/>
</dbReference>
<dbReference type="NCBIfam" id="NF007979">
    <property type="entry name" value="PRK10703.1"/>
    <property type="match status" value="1"/>
</dbReference>
<dbReference type="PANTHER" id="PTHR30146:SF148">
    <property type="entry name" value="HTH-TYPE TRANSCRIPTIONAL REPRESSOR PURR-RELATED"/>
    <property type="match status" value="1"/>
</dbReference>
<dbReference type="PANTHER" id="PTHR30146">
    <property type="entry name" value="LACI-RELATED TRANSCRIPTIONAL REPRESSOR"/>
    <property type="match status" value="1"/>
</dbReference>
<dbReference type="Pfam" id="PF00356">
    <property type="entry name" value="LacI"/>
    <property type="match status" value="1"/>
</dbReference>
<dbReference type="Pfam" id="PF13377">
    <property type="entry name" value="Peripla_BP_3"/>
    <property type="match status" value="1"/>
</dbReference>
<dbReference type="PRINTS" id="PR00036">
    <property type="entry name" value="HTHLACI"/>
</dbReference>
<dbReference type="SMART" id="SM00354">
    <property type="entry name" value="HTH_LACI"/>
    <property type="match status" value="1"/>
</dbReference>
<dbReference type="SUPFAM" id="SSF47413">
    <property type="entry name" value="lambda repressor-like DNA-binding domains"/>
    <property type="match status" value="1"/>
</dbReference>
<dbReference type="SUPFAM" id="SSF53822">
    <property type="entry name" value="Periplasmic binding protein-like I"/>
    <property type="match status" value="1"/>
</dbReference>
<dbReference type="PROSITE" id="PS00356">
    <property type="entry name" value="HTH_LACI_1"/>
    <property type="match status" value="1"/>
</dbReference>
<dbReference type="PROSITE" id="PS50932">
    <property type="entry name" value="HTH_LACI_2"/>
    <property type="match status" value="1"/>
</dbReference>
<gene>
    <name evidence="1" type="primary">purR</name>
    <name type="ordered locus">Spro_2195</name>
</gene>
<name>PURR_SERP5</name>